<dbReference type="EC" id="6.1.1.6" evidence="1"/>
<dbReference type="EMBL" id="CP000563">
    <property type="protein sequence ID" value="ABN60398.1"/>
    <property type="molecule type" value="Genomic_DNA"/>
</dbReference>
<dbReference type="RefSeq" id="WP_006080389.1">
    <property type="nucleotide sequence ID" value="NC_009052.1"/>
</dbReference>
<dbReference type="SMR" id="A3D0Y5"/>
<dbReference type="STRING" id="325240.Sbal_0873"/>
<dbReference type="GeneID" id="11774955"/>
<dbReference type="KEGG" id="sbl:Sbal_0873"/>
<dbReference type="HOGENOM" id="CLU_008255_6_0_6"/>
<dbReference type="OrthoDB" id="9802326at2"/>
<dbReference type="Proteomes" id="UP000001557">
    <property type="component" value="Chromosome"/>
</dbReference>
<dbReference type="GO" id="GO:0005829">
    <property type="term" value="C:cytosol"/>
    <property type="evidence" value="ECO:0007669"/>
    <property type="project" value="TreeGrafter"/>
</dbReference>
<dbReference type="GO" id="GO:0005524">
    <property type="term" value="F:ATP binding"/>
    <property type="evidence" value="ECO:0007669"/>
    <property type="project" value="UniProtKB-UniRule"/>
</dbReference>
<dbReference type="GO" id="GO:0004824">
    <property type="term" value="F:lysine-tRNA ligase activity"/>
    <property type="evidence" value="ECO:0007669"/>
    <property type="project" value="UniProtKB-UniRule"/>
</dbReference>
<dbReference type="GO" id="GO:0000287">
    <property type="term" value="F:magnesium ion binding"/>
    <property type="evidence" value="ECO:0007669"/>
    <property type="project" value="UniProtKB-UniRule"/>
</dbReference>
<dbReference type="GO" id="GO:0000049">
    <property type="term" value="F:tRNA binding"/>
    <property type="evidence" value="ECO:0007669"/>
    <property type="project" value="TreeGrafter"/>
</dbReference>
<dbReference type="GO" id="GO:0006430">
    <property type="term" value="P:lysyl-tRNA aminoacylation"/>
    <property type="evidence" value="ECO:0007669"/>
    <property type="project" value="UniProtKB-UniRule"/>
</dbReference>
<dbReference type="CDD" id="cd00775">
    <property type="entry name" value="LysRS_core"/>
    <property type="match status" value="1"/>
</dbReference>
<dbReference type="CDD" id="cd04322">
    <property type="entry name" value="LysRS_N"/>
    <property type="match status" value="1"/>
</dbReference>
<dbReference type="FunFam" id="2.40.50.140:FF:000024">
    <property type="entry name" value="Lysine--tRNA ligase"/>
    <property type="match status" value="1"/>
</dbReference>
<dbReference type="FunFam" id="3.30.930.10:FF:000001">
    <property type="entry name" value="Lysine--tRNA ligase"/>
    <property type="match status" value="1"/>
</dbReference>
<dbReference type="Gene3D" id="3.30.930.10">
    <property type="entry name" value="Bira Bifunctional Protein, Domain 2"/>
    <property type="match status" value="1"/>
</dbReference>
<dbReference type="Gene3D" id="2.40.50.140">
    <property type="entry name" value="Nucleic acid-binding proteins"/>
    <property type="match status" value="1"/>
</dbReference>
<dbReference type="HAMAP" id="MF_00252">
    <property type="entry name" value="Lys_tRNA_synth_class2"/>
    <property type="match status" value="1"/>
</dbReference>
<dbReference type="InterPro" id="IPR004364">
    <property type="entry name" value="Aa-tRNA-synt_II"/>
</dbReference>
<dbReference type="InterPro" id="IPR006195">
    <property type="entry name" value="aa-tRNA-synth_II"/>
</dbReference>
<dbReference type="InterPro" id="IPR045864">
    <property type="entry name" value="aa-tRNA-synth_II/BPL/LPL"/>
</dbReference>
<dbReference type="InterPro" id="IPR002313">
    <property type="entry name" value="Lys-tRNA-ligase_II"/>
</dbReference>
<dbReference type="InterPro" id="IPR044136">
    <property type="entry name" value="Lys-tRNA-ligase_II_N"/>
</dbReference>
<dbReference type="InterPro" id="IPR018149">
    <property type="entry name" value="Lys-tRNA-synth_II_C"/>
</dbReference>
<dbReference type="InterPro" id="IPR012340">
    <property type="entry name" value="NA-bd_OB-fold"/>
</dbReference>
<dbReference type="InterPro" id="IPR004365">
    <property type="entry name" value="NA-bd_OB_tRNA"/>
</dbReference>
<dbReference type="NCBIfam" id="TIGR00499">
    <property type="entry name" value="lysS_bact"/>
    <property type="match status" value="1"/>
</dbReference>
<dbReference type="NCBIfam" id="NF001756">
    <property type="entry name" value="PRK00484.1"/>
    <property type="match status" value="1"/>
</dbReference>
<dbReference type="PANTHER" id="PTHR42918:SF15">
    <property type="entry name" value="LYSINE--TRNA LIGASE, CHLOROPLASTIC_MITOCHONDRIAL"/>
    <property type="match status" value="1"/>
</dbReference>
<dbReference type="PANTHER" id="PTHR42918">
    <property type="entry name" value="LYSYL-TRNA SYNTHETASE"/>
    <property type="match status" value="1"/>
</dbReference>
<dbReference type="Pfam" id="PF00152">
    <property type="entry name" value="tRNA-synt_2"/>
    <property type="match status" value="1"/>
</dbReference>
<dbReference type="Pfam" id="PF01336">
    <property type="entry name" value="tRNA_anti-codon"/>
    <property type="match status" value="1"/>
</dbReference>
<dbReference type="PRINTS" id="PR00982">
    <property type="entry name" value="TRNASYNTHLYS"/>
</dbReference>
<dbReference type="SUPFAM" id="SSF55681">
    <property type="entry name" value="Class II aaRS and biotin synthetases"/>
    <property type="match status" value="1"/>
</dbReference>
<dbReference type="SUPFAM" id="SSF50249">
    <property type="entry name" value="Nucleic acid-binding proteins"/>
    <property type="match status" value="1"/>
</dbReference>
<dbReference type="PROSITE" id="PS50862">
    <property type="entry name" value="AA_TRNA_LIGASE_II"/>
    <property type="match status" value="1"/>
</dbReference>
<keyword id="KW-0030">Aminoacyl-tRNA synthetase</keyword>
<keyword id="KW-0067">ATP-binding</keyword>
<keyword id="KW-0963">Cytoplasm</keyword>
<keyword id="KW-0436">Ligase</keyword>
<keyword id="KW-0460">Magnesium</keyword>
<keyword id="KW-0479">Metal-binding</keyword>
<keyword id="KW-0547">Nucleotide-binding</keyword>
<keyword id="KW-0648">Protein biosynthesis</keyword>
<keyword id="KW-1185">Reference proteome</keyword>
<reference key="1">
    <citation type="submission" date="2007-02" db="EMBL/GenBank/DDBJ databases">
        <title>Complete sequence of chromosome of Shewanella baltica OS155.</title>
        <authorList>
            <consortium name="US DOE Joint Genome Institute"/>
            <person name="Copeland A."/>
            <person name="Lucas S."/>
            <person name="Lapidus A."/>
            <person name="Barry K."/>
            <person name="Detter J.C."/>
            <person name="Glavina del Rio T."/>
            <person name="Hammon N."/>
            <person name="Israni S."/>
            <person name="Dalin E."/>
            <person name="Tice H."/>
            <person name="Pitluck S."/>
            <person name="Sims D.R."/>
            <person name="Brettin T."/>
            <person name="Bruce D."/>
            <person name="Han C."/>
            <person name="Tapia R."/>
            <person name="Brainard J."/>
            <person name="Schmutz J."/>
            <person name="Larimer F."/>
            <person name="Land M."/>
            <person name="Hauser L."/>
            <person name="Kyrpides N."/>
            <person name="Mikhailova N."/>
            <person name="Brettar I."/>
            <person name="Klappenbach J."/>
            <person name="Konstantinidis K."/>
            <person name="Rodrigues J."/>
            <person name="Tiedje J."/>
            <person name="Richardson P."/>
        </authorList>
    </citation>
    <scope>NUCLEOTIDE SEQUENCE [LARGE SCALE GENOMIC DNA]</scope>
    <source>
        <strain>OS155 / ATCC BAA-1091</strain>
    </source>
</reference>
<accession>A3D0Y5</accession>
<gene>
    <name evidence="1" type="primary">lysS</name>
    <name type="ordered locus">Sbal_0873</name>
</gene>
<name>SYK_SHEB5</name>
<protein>
    <recommendedName>
        <fullName evidence="1">Lysine--tRNA ligase</fullName>
        <ecNumber evidence="1">6.1.1.6</ecNumber>
    </recommendedName>
    <alternativeName>
        <fullName evidence="1">Lysyl-tRNA synthetase</fullName>
        <shortName evidence="1">LysRS</shortName>
    </alternativeName>
</protein>
<feature type="chain" id="PRO_1000012925" description="Lysine--tRNA ligase">
    <location>
        <begin position="1"/>
        <end position="500"/>
    </location>
</feature>
<feature type="binding site" evidence="1">
    <location>
        <position position="410"/>
    </location>
    <ligand>
        <name>Mg(2+)</name>
        <dbReference type="ChEBI" id="CHEBI:18420"/>
        <label>1</label>
    </ligand>
</feature>
<feature type="binding site" evidence="1">
    <location>
        <position position="417"/>
    </location>
    <ligand>
        <name>Mg(2+)</name>
        <dbReference type="ChEBI" id="CHEBI:18420"/>
        <label>1</label>
    </ligand>
</feature>
<feature type="binding site" evidence="1">
    <location>
        <position position="417"/>
    </location>
    <ligand>
        <name>Mg(2+)</name>
        <dbReference type="ChEBI" id="CHEBI:18420"/>
        <label>2</label>
    </ligand>
</feature>
<evidence type="ECO:0000255" key="1">
    <source>
        <dbReference type="HAMAP-Rule" id="MF_00252"/>
    </source>
</evidence>
<sequence length="500" mass="57025">MTEQVIDENKLIAERRAKLESIRPNCSANAHPNTFRRTHKAAELQAQYGQNTKEELEALGFKTSIAGRIMAKRGPFLVIQDVSGRIQAYAEKSVQADLKERFQGLDIGDIIGVTGQLHLSGKGDLYVNMEQYELLTKALRPLPADYYGLADQEMRYRQRYVDLIVNEDSRNAFIMRSKVVSAIRNFMIKKEFMEVETPMMHVIPGGASARPFITHHNALDMPMYLRIAPELYLKRLVVGGFERVFEINRNFRNEGLSPRHNPEFTMMEFYMAYADYKDLMDLTEEMLSSIAIELLGSAQMPYGEHTVDFGGPYARLSMLEAIQKYNPDNATIQAMTYEQVKDVEFMRDLAKSLGMKIEKFWTCGQLLEEIFGETAEWQLMQPTFITGYPADISPLARRNDDNHFITDRFEFFIGGREVANGFSELNDAEDQDNRFKAQVDAKDAGDDEAMFYDADYITALEHGLPPTAGQGIGIDRLVMLFTNTHTIRDVILFPAMRPQA</sequence>
<organism>
    <name type="scientific">Shewanella baltica (strain OS155 / ATCC BAA-1091)</name>
    <dbReference type="NCBI Taxonomy" id="325240"/>
    <lineage>
        <taxon>Bacteria</taxon>
        <taxon>Pseudomonadati</taxon>
        <taxon>Pseudomonadota</taxon>
        <taxon>Gammaproteobacteria</taxon>
        <taxon>Alteromonadales</taxon>
        <taxon>Shewanellaceae</taxon>
        <taxon>Shewanella</taxon>
    </lineage>
</organism>
<proteinExistence type="inferred from homology"/>
<comment type="catalytic activity">
    <reaction evidence="1">
        <text>tRNA(Lys) + L-lysine + ATP = L-lysyl-tRNA(Lys) + AMP + diphosphate</text>
        <dbReference type="Rhea" id="RHEA:20792"/>
        <dbReference type="Rhea" id="RHEA-COMP:9696"/>
        <dbReference type="Rhea" id="RHEA-COMP:9697"/>
        <dbReference type="ChEBI" id="CHEBI:30616"/>
        <dbReference type="ChEBI" id="CHEBI:32551"/>
        <dbReference type="ChEBI" id="CHEBI:33019"/>
        <dbReference type="ChEBI" id="CHEBI:78442"/>
        <dbReference type="ChEBI" id="CHEBI:78529"/>
        <dbReference type="ChEBI" id="CHEBI:456215"/>
        <dbReference type="EC" id="6.1.1.6"/>
    </reaction>
</comment>
<comment type="cofactor">
    <cofactor evidence="1">
        <name>Mg(2+)</name>
        <dbReference type="ChEBI" id="CHEBI:18420"/>
    </cofactor>
    <text evidence="1">Binds 3 Mg(2+) ions per subunit.</text>
</comment>
<comment type="subunit">
    <text evidence="1">Homodimer.</text>
</comment>
<comment type="subcellular location">
    <subcellularLocation>
        <location evidence="1">Cytoplasm</location>
    </subcellularLocation>
</comment>
<comment type="similarity">
    <text evidence="1">Belongs to the class-II aminoacyl-tRNA synthetase family.</text>
</comment>